<keyword id="KW-0256">Endoplasmic reticulum</keyword>
<keyword id="KW-0349">Heme</keyword>
<keyword id="KW-0408">Iron</keyword>
<keyword id="KW-0472">Membrane</keyword>
<keyword id="KW-0479">Metal-binding</keyword>
<keyword id="KW-0492">Microsome</keyword>
<keyword id="KW-0503">Monooxygenase</keyword>
<keyword id="KW-0560">Oxidoreductase</keyword>
<keyword id="KW-0812">Transmembrane</keyword>
<keyword id="KW-1133">Transmembrane helix</keyword>
<accession>Q948Y1</accession>
<feature type="chain" id="PRO_0000395196" description="(S)-canadine synthase">
    <location>
        <begin position="1"/>
        <end position="491"/>
    </location>
</feature>
<feature type="transmembrane region" description="Helical" evidence="2">
    <location>
        <begin position="6"/>
        <end position="26"/>
    </location>
</feature>
<feature type="binding site" description="axial binding residue" evidence="1">
    <location>
        <position position="434"/>
    </location>
    <ligand>
        <name>heme</name>
        <dbReference type="ChEBI" id="CHEBI:30413"/>
    </ligand>
    <ligandPart>
        <name>Fe</name>
        <dbReference type="ChEBI" id="CHEBI:18248"/>
    </ligandPart>
</feature>
<sequence>MEMNPLLVCATVAIVFATTTIIRILFSSSSLPQMKWPSGPRKLPIIGNLHQLGDDVLHVALAKLAKVHGSVMTIWIGSWRPVIVISDIEKAWEVLVNKSADYGARDMPEITKIASASWHTISTSDAGSFWQNVRKGLQSGAMGPLNVAAQNQYQERDMKRLIKAMSDEAANNNGIVKPLDHIKKNTVRLLTRLIFGQAFDDNKFIESMHYEIEDIIRISGYARLAEAFYYAKYLPSHKKAEREAFLVKCRVEELVRPLLSSKPPTNSYLYFLLSQNFEEEVIIFCIFELYLLGVDSTSSTTTWALAYLIREQGAQEKLYQDIRMTLGDVDLVKIEDVNKLKYLQGVVKETMRMKPIAPLAIPHKTAKETTLMGTKVAKGTRIMVNLYALHHNQNIWPDPYKFMPERFLEGETGTAYNKAMEQSFLPFSAGMRICAGMDLGKLQFAFALANLVNAFKWSCVEEGKLPDMGEELSFVLLMKTPLEARIAGRNV</sequence>
<reference key="1">
    <citation type="journal article" date="2003" name="J. Biol. Chem.">
        <title>Molecular cloning and characterization of CYP719, a methylenedioxy bridge-forming enzyme that belongs to a novel P450 family, from cultured Coptis japonica cells.</title>
        <authorList>
            <person name="Ikezawa N."/>
            <person name="Tanaka M."/>
            <person name="Nagayoshi M."/>
            <person name="Shinkyo R."/>
            <person name="Sakaki T."/>
            <person name="Inouye K."/>
            <person name="Sato F."/>
        </authorList>
    </citation>
    <scope>NUCLEOTIDE SEQUENCE [MRNA]</scope>
    <scope>FUNCTION</scope>
    <scope>CATALYTIC ACTIVITY</scope>
    <scope>TISSUE SPECIFICITY</scope>
</reference>
<organism>
    <name type="scientific">Coptis japonica</name>
    <name type="common">Japanese goldthread</name>
    <dbReference type="NCBI Taxonomy" id="3442"/>
    <lineage>
        <taxon>Eukaryota</taxon>
        <taxon>Viridiplantae</taxon>
        <taxon>Streptophyta</taxon>
        <taxon>Embryophyta</taxon>
        <taxon>Tracheophyta</taxon>
        <taxon>Spermatophyta</taxon>
        <taxon>Magnoliopsida</taxon>
        <taxon>Ranunculales</taxon>
        <taxon>Ranunculaceae</taxon>
        <taxon>Coptidoideae</taxon>
        <taxon>Coptis</taxon>
    </lineage>
</organism>
<comment type="function">
    <text evidence="3">Involved in the last but one step of the biosynthesis of berberine, an antimicrobial benzylisoquinoline alkaloid. Converts (S)-tetrahydrocolumbamine (THC) to (S)-tetrahydroberberine (THB) also called (S)-canadine.</text>
</comment>
<comment type="catalytic activity">
    <reaction evidence="3">
        <text>(S)-tetrahydrocolumbamine + reduced [NADPH--hemoprotein reductase] + O2 = (S)-canadine + oxidized [NADPH--hemoprotein reductase] + 2 H2O + H(+)</text>
        <dbReference type="Rhea" id="RHEA:21456"/>
        <dbReference type="Rhea" id="RHEA-COMP:11964"/>
        <dbReference type="Rhea" id="RHEA-COMP:11965"/>
        <dbReference type="ChEBI" id="CHEBI:15377"/>
        <dbReference type="ChEBI" id="CHEBI:15378"/>
        <dbReference type="ChEBI" id="CHEBI:15379"/>
        <dbReference type="ChEBI" id="CHEBI:16592"/>
        <dbReference type="ChEBI" id="CHEBI:17772"/>
        <dbReference type="ChEBI" id="CHEBI:57618"/>
        <dbReference type="ChEBI" id="CHEBI:58210"/>
        <dbReference type="EC" id="1.14.19.68"/>
    </reaction>
</comment>
<comment type="cofactor">
    <cofactor evidence="1">
        <name>heme</name>
        <dbReference type="ChEBI" id="CHEBI:30413"/>
    </cofactor>
</comment>
<comment type="subcellular location">
    <subcellularLocation>
        <location evidence="4">Endoplasmic reticulum membrane</location>
        <topology evidence="4">Single-pass membrane protein</topology>
    </subcellularLocation>
    <subcellularLocation>
        <location evidence="4">Microsome membrane</location>
        <topology evidence="4">Single-pass membrane protein</topology>
    </subcellularLocation>
</comment>
<comment type="tissue specificity">
    <text evidence="3">Expressed at low levels in roots.</text>
</comment>
<comment type="similarity">
    <text evidence="4">Belongs to the cytochrome P450 family.</text>
</comment>
<name>C719A_COPJA</name>
<proteinExistence type="evidence at protein level"/>
<evidence type="ECO:0000250" key="1"/>
<evidence type="ECO:0000255" key="2"/>
<evidence type="ECO:0000269" key="3">
    <source>
    </source>
</evidence>
<evidence type="ECO:0000305" key="4"/>
<gene>
    <name type="primary">CYP719A1</name>
</gene>
<dbReference type="EC" id="1.14.19.68" evidence="3"/>
<dbReference type="EMBL" id="AB026122">
    <property type="protein sequence ID" value="BAB68769.1"/>
    <property type="molecule type" value="mRNA"/>
</dbReference>
<dbReference type="SMR" id="Q948Y1"/>
<dbReference type="KEGG" id="ag:BAB68769"/>
<dbReference type="SABIO-RK" id="Q948Y1"/>
<dbReference type="GO" id="GO:0005789">
    <property type="term" value="C:endoplasmic reticulum membrane"/>
    <property type="evidence" value="ECO:0007669"/>
    <property type="project" value="UniProtKB-SubCell"/>
</dbReference>
<dbReference type="GO" id="GO:0043231">
    <property type="term" value="C:intracellular membrane-bounded organelle"/>
    <property type="evidence" value="ECO:0000314"/>
    <property type="project" value="UniProtKB"/>
</dbReference>
<dbReference type="GO" id="GO:0047056">
    <property type="term" value="F:(S)-canadine synthase activity"/>
    <property type="evidence" value="ECO:0000314"/>
    <property type="project" value="UniProtKB"/>
</dbReference>
<dbReference type="GO" id="GO:0020037">
    <property type="term" value="F:heme binding"/>
    <property type="evidence" value="ECO:0007669"/>
    <property type="project" value="InterPro"/>
</dbReference>
<dbReference type="GO" id="GO:0005506">
    <property type="term" value="F:iron ion binding"/>
    <property type="evidence" value="ECO:0007669"/>
    <property type="project" value="InterPro"/>
</dbReference>
<dbReference type="GO" id="GO:0004497">
    <property type="term" value="F:monooxygenase activity"/>
    <property type="evidence" value="ECO:0007669"/>
    <property type="project" value="UniProtKB-KW"/>
</dbReference>
<dbReference type="GO" id="GO:0033075">
    <property type="term" value="P:isoquinoline alkaloid biosynthetic process"/>
    <property type="evidence" value="ECO:0000314"/>
    <property type="project" value="UniProtKB"/>
</dbReference>
<dbReference type="FunFam" id="1.10.630.10:FF:000147">
    <property type="entry name" value="(S)-stylopine synthase 1"/>
    <property type="match status" value="1"/>
</dbReference>
<dbReference type="Gene3D" id="1.10.630.10">
    <property type="entry name" value="Cytochrome P450"/>
    <property type="match status" value="1"/>
</dbReference>
<dbReference type="InterPro" id="IPR001128">
    <property type="entry name" value="Cyt_P450"/>
</dbReference>
<dbReference type="InterPro" id="IPR017972">
    <property type="entry name" value="Cyt_P450_CS"/>
</dbReference>
<dbReference type="InterPro" id="IPR002401">
    <property type="entry name" value="Cyt_P450_E_grp-I"/>
</dbReference>
<dbReference type="InterPro" id="IPR036396">
    <property type="entry name" value="Cyt_P450_sf"/>
</dbReference>
<dbReference type="PANTHER" id="PTHR47944">
    <property type="entry name" value="CYTOCHROME P450 98A9"/>
    <property type="match status" value="1"/>
</dbReference>
<dbReference type="PANTHER" id="PTHR47944:SF4">
    <property type="entry name" value="OS09G0441700 PROTEIN"/>
    <property type="match status" value="1"/>
</dbReference>
<dbReference type="Pfam" id="PF00067">
    <property type="entry name" value="p450"/>
    <property type="match status" value="1"/>
</dbReference>
<dbReference type="PRINTS" id="PR00463">
    <property type="entry name" value="EP450I"/>
</dbReference>
<dbReference type="PRINTS" id="PR00385">
    <property type="entry name" value="P450"/>
</dbReference>
<dbReference type="SUPFAM" id="SSF48264">
    <property type="entry name" value="Cytochrome P450"/>
    <property type="match status" value="1"/>
</dbReference>
<dbReference type="PROSITE" id="PS00086">
    <property type="entry name" value="CYTOCHROME_P450"/>
    <property type="match status" value="1"/>
</dbReference>
<protein>
    <recommendedName>
        <fullName>(S)-canadine synthase</fullName>
        <ecNumber evidence="3">1.14.19.68</ecNumber>
    </recommendedName>
    <alternativeName>
        <fullName>(S)-tetrahydrocolumbamine oxidase (methylenedioxy-bridge-forming)</fullName>
    </alternativeName>
    <alternativeName>
        <fullName>Cytochrome P450 719A1</fullName>
    </alternativeName>
</protein>